<name>ADE_ACIAD</name>
<dbReference type="EC" id="3.5.4.2" evidence="1"/>
<dbReference type="EMBL" id="CR543861">
    <property type="protein sequence ID" value="CAG68119.1"/>
    <property type="molecule type" value="Genomic_DNA"/>
</dbReference>
<dbReference type="RefSeq" id="WP_004925995.1">
    <property type="nucleotide sequence ID" value="NC_005966.1"/>
</dbReference>
<dbReference type="SMR" id="Q6FCU0"/>
<dbReference type="STRING" id="202950.GCA_001485005_01012"/>
<dbReference type="GeneID" id="45233670"/>
<dbReference type="KEGG" id="aci:ACIAD1245"/>
<dbReference type="eggNOG" id="COG1816">
    <property type="taxonomic scope" value="Bacteria"/>
</dbReference>
<dbReference type="HOGENOM" id="CLU_039228_7_0_6"/>
<dbReference type="OrthoDB" id="105475at2"/>
<dbReference type="BioCyc" id="ASP62977:ACIAD_RS05730-MONOMER"/>
<dbReference type="Proteomes" id="UP000000430">
    <property type="component" value="Chromosome"/>
</dbReference>
<dbReference type="GO" id="GO:0005829">
    <property type="term" value="C:cytosol"/>
    <property type="evidence" value="ECO:0007669"/>
    <property type="project" value="TreeGrafter"/>
</dbReference>
<dbReference type="GO" id="GO:0000034">
    <property type="term" value="F:adenine deaminase activity"/>
    <property type="evidence" value="ECO:0007669"/>
    <property type="project" value="UniProtKB-UniRule"/>
</dbReference>
<dbReference type="GO" id="GO:0008270">
    <property type="term" value="F:zinc ion binding"/>
    <property type="evidence" value="ECO:0007669"/>
    <property type="project" value="UniProtKB-UniRule"/>
</dbReference>
<dbReference type="GO" id="GO:0006146">
    <property type="term" value="P:adenine catabolic process"/>
    <property type="evidence" value="ECO:0007669"/>
    <property type="project" value="UniProtKB-UniRule"/>
</dbReference>
<dbReference type="GO" id="GO:0043103">
    <property type="term" value="P:hypoxanthine salvage"/>
    <property type="evidence" value="ECO:0007669"/>
    <property type="project" value="UniProtKB-UniRule"/>
</dbReference>
<dbReference type="GO" id="GO:0009117">
    <property type="term" value="P:nucleotide metabolic process"/>
    <property type="evidence" value="ECO:0007669"/>
    <property type="project" value="UniProtKB-KW"/>
</dbReference>
<dbReference type="CDD" id="cd01320">
    <property type="entry name" value="ADA"/>
    <property type="match status" value="1"/>
</dbReference>
<dbReference type="FunFam" id="3.20.20.140:FF:000039">
    <property type="entry name" value="Adenine deaminase"/>
    <property type="match status" value="1"/>
</dbReference>
<dbReference type="Gene3D" id="3.20.20.140">
    <property type="entry name" value="Metal-dependent hydrolases"/>
    <property type="match status" value="1"/>
</dbReference>
<dbReference type="HAMAP" id="MF_01962">
    <property type="entry name" value="Adenine_deaminase"/>
    <property type="match status" value="1"/>
</dbReference>
<dbReference type="InterPro" id="IPR001365">
    <property type="entry name" value="A_deaminase_dom"/>
</dbReference>
<dbReference type="InterPro" id="IPR028892">
    <property type="entry name" value="ADE"/>
</dbReference>
<dbReference type="InterPro" id="IPR006330">
    <property type="entry name" value="Ado/ade_deaminase"/>
</dbReference>
<dbReference type="InterPro" id="IPR032466">
    <property type="entry name" value="Metal_Hydrolase"/>
</dbReference>
<dbReference type="NCBIfam" id="TIGR01430">
    <property type="entry name" value="aden_deam"/>
    <property type="match status" value="1"/>
</dbReference>
<dbReference type="NCBIfam" id="NF006850">
    <property type="entry name" value="PRK09358.1-6"/>
    <property type="match status" value="1"/>
</dbReference>
<dbReference type="PANTHER" id="PTHR43114">
    <property type="entry name" value="ADENINE DEAMINASE"/>
    <property type="match status" value="1"/>
</dbReference>
<dbReference type="PANTHER" id="PTHR43114:SF6">
    <property type="entry name" value="ADENINE DEAMINASE"/>
    <property type="match status" value="1"/>
</dbReference>
<dbReference type="Pfam" id="PF00962">
    <property type="entry name" value="A_deaminase"/>
    <property type="match status" value="1"/>
</dbReference>
<dbReference type="SUPFAM" id="SSF51556">
    <property type="entry name" value="Metallo-dependent hydrolases"/>
    <property type="match status" value="1"/>
</dbReference>
<comment type="function">
    <text evidence="1">Catalyzes the hydrolytic deamination of adenine to hypoxanthine. Plays an important role in the purine salvage pathway and in nitrogen catabolism.</text>
</comment>
<comment type="catalytic activity">
    <reaction evidence="1">
        <text>adenine + H2O + H(+) = hypoxanthine + NH4(+)</text>
        <dbReference type="Rhea" id="RHEA:23688"/>
        <dbReference type="ChEBI" id="CHEBI:15377"/>
        <dbReference type="ChEBI" id="CHEBI:15378"/>
        <dbReference type="ChEBI" id="CHEBI:16708"/>
        <dbReference type="ChEBI" id="CHEBI:17368"/>
        <dbReference type="ChEBI" id="CHEBI:28938"/>
        <dbReference type="EC" id="3.5.4.2"/>
    </reaction>
</comment>
<comment type="cofactor">
    <cofactor evidence="1">
        <name>Zn(2+)</name>
        <dbReference type="ChEBI" id="CHEBI:29105"/>
    </cofactor>
    <text evidence="1">Binds 1 zinc ion per subunit.</text>
</comment>
<comment type="similarity">
    <text evidence="1">Belongs to the metallo-dependent hydrolases superfamily. Adenosine and AMP deaminases family. Adenine deaminase type 2 subfamily.</text>
</comment>
<organism>
    <name type="scientific">Acinetobacter baylyi (strain ATCC 33305 / BD413 / ADP1)</name>
    <dbReference type="NCBI Taxonomy" id="62977"/>
    <lineage>
        <taxon>Bacteria</taxon>
        <taxon>Pseudomonadati</taxon>
        <taxon>Pseudomonadota</taxon>
        <taxon>Gammaproteobacteria</taxon>
        <taxon>Moraxellales</taxon>
        <taxon>Moraxellaceae</taxon>
        <taxon>Acinetobacter</taxon>
    </lineage>
</organism>
<accession>Q6FCU0</accession>
<proteinExistence type="inferred from homology"/>
<gene>
    <name type="ordered locus">ACIAD1245</name>
</gene>
<evidence type="ECO:0000255" key="1">
    <source>
        <dbReference type="HAMAP-Rule" id="MF_01962"/>
    </source>
</evidence>
<feature type="chain" id="PRO_1000128834" description="Adenine deaminase">
    <location>
        <begin position="1"/>
        <end position="332"/>
    </location>
</feature>
<feature type="active site" description="Proton donor" evidence="1">
    <location>
        <position position="199"/>
    </location>
</feature>
<feature type="binding site" evidence="1">
    <location>
        <position position="16"/>
    </location>
    <ligand>
        <name>Zn(2+)</name>
        <dbReference type="ChEBI" id="CHEBI:29105"/>
        <note>catalytic</note>
    </ligand>
</feature>
<feature type="binding site" evidence="1">
    <location>
        <position position="18"/>
    </location>
    <ligand>
        <name>Zn(2+)</name>
        <dbReference type="ChEBI" id="CHEBI:29105"/>
        <note>catalytic</note>
    </ligand>
</feature>
<feature type="binding site" evidence="1">
    <location>
        <position position="196"/>
    </location>
    <ligand>
        <name>Zn(2+)</name>
        <dbReference type="ChEBI" id="CHEBI:29105"/>
        <note>catalytic</note>
    </ligand>
</feature>
<feature type="binding site" evidence="1">
    <location>
        <position position="277"/>
    </location>
    <ligand>
        <name>Zn(2+)</name>
        <dbReference type="ChEBI" id="CHEBI:29105"/>
        <note>catalytic</note>
    </ligand>
</feature>
<feature type="binding site" evidence="1">
    <location>
        <position position="278"/>
    </location>
    <ligand>
        <name>substrate</name>
    </ligand>
</feature>
<feature type="site" description="Important for catalytic activity" evidence="1">
    <location>
        <position position="220"/>
    </location>
</feature>
<reference key="1">
    <citation type="journal article" date="2004" name="Nucleic Acids Res.">
        <title>Unique features revealed by the genome sequence of Acinetobacter sp. ADP1, a versatile and naturally transformation competent bacterium.</title>
        <authorList>
            <person name="Barbe V."/>
            <person name="Vallenet D."/>
            <person name="Fonknechten N."/>
            <person name="Kreimeyer A."/>
            <person name="Oztas S."/>
            <person name="Labarre L."/>
            <person name="Cruveiller S."/>
            <person name="Robert C."/>
            <person name="Duprat S."/>
            <person name="Wincker P."/>
            <person name="Ornston L.N."/>
            <person name="Weissenbach J."/>
            <person name="Marliere P."/>
            <person name="Cohen G.N."/>
            <person name="Medigue C."/>
        </authorList>
    </citation>
    <scope>NUCLEOTIDE SEQUENCE [LARGE SCALE GENOMIC DNA]</scope>
    <source>
        <strain>ATCC 33305 / BD413 / ADP1</strain>
    </source>
</reference>
<sequence>MNQSELIRALPKAELHVHIEGTFEPELMFEIAQRNHIDIPYKSVEEIKKAYNFHNLQSFLDIYYAGANVLINEQDFYDLAWAYFKKCAEDRVVHTEMFFDPQTHTERGVSFEIVLNGLKRACKDAKEHLGISSHLIMCFLRHLSEEDAFKTLEQALPYKADIIAVGLDSSEVGHPPSKFARVFEKAREEGFLVVAHAGEEGPPEYVWEALDLLKVNRIDHGVRSEEDPALMQRLIQEKMPLTVCPLSNLKLCVVNDMKEHNIRRLLNQGVHVTVNSDDPSYFGGYMNDNFVAIQAALDLSNEELKKLAINSFEASFIDEEEKQNWIEEINQI</sequence>
<protein>
    <recommendedName>
        <fullName evidence="1">Adenine deaminase</fullName>
        <shortName evidence="1">ADE</shortName>
        <ecNumber evidence="1">3.5.4.2</ecNumber>
    </recommendedName>
    <alternativeName>
        <fullName evidence="1">Adenine aminohydrolase</fullName>
        <shortName evidence="1">AAH</shortName>
    </alternativeName>
</protein>
<keyword id="KW-0378">Hydrolase</keyword>
<keyword id="KW-0479">Metal-binding</keyword>
<keyword id="KW-0546">Nucleotide metabolism</keyword>
<keyword id="KW-0862">Zinc</keyword>